<proteinExistence type="evidence at transcript level"/>
<gene>
    <name evidence="10" type="primary">ALF</name>
</gene>
<keyword id="KW-0025">Alternative splicing</keyword>
<keyword id="KW-0044">Antibiotic</keyword>
<keyword id="KW-0929">Antimicrobial</keyword>
<keyword id="KW-1015">Disulfide bond</keyword>
<keyword id="KW-0325">Glycoprotein</keyword>
<keyword id="KW-0964">Secreted</keyword>
<keyword id="KW-0732">Signal</keyword>
<protein>
    <recommendedName>
        <fullName evidence="6 7 9">Anti-lipopolysaccharide factor</fullName>
        <shortName evidence="6">PtALF</shortName>
    </recommendedName>
</protein>
<comment type="function">
    <text evidence="1">May bind to bacterial LPS and thus specifically inhibit the LPS-mediated activation of the hemolymph coagulation. It has a strong antibacterial effect especially on the growth of Gram-negative bacteria (By similarity).</text>
</comment>
<comment type="subcellular location">
    <subcellularLocation>
        <location evidence="8">Secreted</location>
    </subcellularLocation>
</comment>
<comment type="alternative products">
    <event type="alternative splicing"/>
    <isoform>
        <id>C0KJQ4-1</id>
        <name evidence="5">1</name>
        <name evidence="7">PtesALF3</name>
        <sequence type="displayed"/>
    </isoform>
    <isoform>
        <id>C0KJQ4-2</id>
        <name evidence="5">2</name>
        <name evidence="7">PtesALF1</name>
        <sequence type="described" ref="VSP_041458"/>
    </isoform>
</comment>
<comment type="tissue specificity">
    <text evidence="4 5">Isoform 1 is highly expressed in muscle and stomach, moderately in heart and gill and at lower levels in hemocytes and hepatopancreas. Isoform 2 is mainly expressed in gill, hepatopancreas, muscle and eyestalk.</text>
</comment>
<comment type="induction">
    <text evidence="4 5">By injection with live V.alginolyticus. Isoform 2 expression is highest 24 hours post-injection. Expression of isoform 1 and isoform 2 is reduced at 3 hours post-injection, increases to a peak at 12 hours post-injection, and returns to control levels at 32 hours post-injection (PubMed:21168510). Isoform 1 expression is up-regulated at 3 and 24 hours post-injection and reaches a peak at 48 hours post-injection (PubMed:20167286).</text>
</comment>
<comment type="miscellaneous">
    <molecule>Isoform 1</molecule>
    <text evidence="5">Major isoform.</text>
</comment>
<comment type="miscellaneous">
    <molecule>Isoform 2</molecule>
    <text evidence="5">Minor isoform detected in approximately 30% of the cDNA clones. May be produced at very low levels due to a premature stop codon in the mRNA, leading to nonsense-mediated mRNA decay.</text>
</comment>
<comment type="sequence caution" evidence="8">
    <conflict type="frameshift">
        <sequence resource="EMBL-CDS" id="ADU25043"/>
    </conflict>
</comment>
<accession>C0KJQ4</accession>
<accession>C6K7B2</accession>
<accession>E7CRH9</accession>
<accession>E7CRI0</accession>
<accession>E7CRI7</accession>
<accession>E7CRJ1</accession>
<accession>E7CRJ8</accession>
<accession>E7CRK1</accession>
<accession>E7CRK2</accession>
<accession>E7CRK4</accession>
<accession>E7CRK5</accession>
<accession>E7CRK6</accession>
<accession>E7CUG9</accession>
<accession>E7CUH0</accession>
<name>ALPS_PORTR</name>
<dbReference type="EMBL" id="FJ612108">
    <property type="protein sequence ID" value="ACM89169.2"/>
    <property type="molecule type" value="mRNA"/>
</dbReference>
<dbReference type="EMBL" id="GQ165621">
    <property type="protein sequence ID" value="ACS45385.2"/>
    <property type="molecule type" value="mRNA"/>
</dbReference>
<dbReference type="EMBL" id="HM536671">
    <property type="protein sequence ID" value="ADU25060.1"/>
    <property type="molecule type" value="Genomic_DNA"/>
</dbReference>
<dbReference type="EMBL" id="HM536672">
    <property type="protein sequence ID" value="ADU25061.1"/>
    <property type="molecule type" value="Genomic_DNA"/>
</dbReference>
<dbReference type="EMBL" id="HM536673">
    <property type="protein sequence ID" value="ADU25062.1"/>
    <property type="molecule type" value="Genomic_DNA"/>
</dbReference>
<dbReference type="EMBL" id="HM536674">
    <property type="protein sequence ID" value="ADU25063.1"/>
    <property type="molecule type" value="Genomic_DNA"/>
</dbReference>
<dbReference type="EMBL" id="HM536675">
    <property type="protein sequence ID" value="ADU25064.1"/>
    <property type="molecule type" value="Genomic_DNA"/>
</dbReference>
<dbReference type="EMBL" id="HM536676">
    <property type="protein sequence ID" value="ADU25065.1"/>
    <property type="molecule type" value="Genomic_DNA"/>
</dbReference>
<dbReference type="EMBL" id="HM536677">
    <property type="protein sequence ID" value="ADU25066.1"/>
    <property type="molecule type" value="Genomic_DNA"/>
</dbReference>
<dbReference type="EMBL" id="HM536678">
    <property type="protein sequence ID" value="ADU25067.1"/>
    <property type="molecule type" value="Genomic_DNA"/>
</dbReference>
<dbReference type="EMBL" id="HM536679">
    <property type="protein sequence ID" value="ADU25068.1"/>
    <property type="molecule type" value="Genomic_DNA"/>
</dbReference>
<dbReference type="EMBL" id="HM536680">
    <property type="protein sequence ID" value="ADU25069.1"/>
    <property type="molecule type" value="Genomic_DNA"/>
</dbReference>
<dbReference type="EMBL" id="HM536681">
    <property type="protein sequence ID" value="ADU25070.1"/>
    <property type="molecule type" value="Genomic_DNA"/>
</dbReference>
<dbReference type="EMBL" id="HM536682">
    <property type="protein sequence ID" value="ADU25071.1"/>
    <property type="molecule type" value="Genomic_DNA"/>
</dbReference>
<dbReference type="EMBL" id="HM536683">
    <property type="protein sequence ID" value="ADU25072.1"/>
    <property type="molecule type" value="Genomic_DNA"/>
</dbReference>
<dbReference type="EMBL" id="HM536684">
    <property type="protein sequence ID" value="ADU25073.1"/>
    <property type="molecule type" value="Genomic_DNA"/>
</dbReference>
<dbReference type="EMBL" id="HM536685">
    <property type="protein sequence ID" value="ADU25074.1"/>
    <property type="molecule type" value="Genomic_DNA"/>
</dbReference>
<dbReference type="EMBL" id="HM536686">
    <property type="protein sequence ID" value="ADU25075.1"/>
    <property type="molecule type" value="Genomic_DNA"/>
</dbReference>
<dbReference type="EMBL" id="HM536687">
    <property type="protein sequence ID" value="ADU25076.1"/>
    <property type="molecule type" value="Genomic_DNA"/>
</dbReference>
<dbReference type="EMBL" id="HM536688">
    <property type="protein sequence ID" value="ADU25077.1"/>
    <property type="molecule type" value="Genomic_DNA"/>
</dbReference>
<dbReference type="EMBL" id="HM536689">
    <property type="protein sequence ID" value="ADU25078.1"/>
    <property type="molecule type" value="Genomic_DNA"/>
</dbReference>
<dbReference type="EMBL" id="HM536690">
    <property type="protein sequence ID" value="ADU25079.1"/>
    <property type="molecule type" value="Genomic_DNA"/>
</dbReference>
<dbReference type="EMBL" id="HM536691">
    <property type="protein sequence ID" value="ADU25080.1"/>
    <property type="molecule type" value="Genomic_DNA"/>
</dbReference>
<dbReference type="EMBL" id="HM536692">
    <property type="protein sequence ID" value="ADU25081.1"/>
    <property type="molecule type" value="Genomic_DNA"/>
</dbReference>
<dbReference type="EMBL" id="HM536693">
    <property type="protein sequence ID" value="ADU25082.1"/>
    <property type="molecule type" value="Genomic_DNA"/>
</dbReference>
<dbReference type="EMBL" id="HM536694">
    <property type="protein sequence ID" value="ADU25083.1"/>
    <property type="molecule type" value="Genomic_DNA"/>
</dbReference>
<dbReference type="EMBL" id="HM536695">
    <property type="protein sequence ID" value="ADU25084.1"/>
    <property type="molecule type" value="Genomic_DNA"/>
</dbReference>
<dbReference type="EMBL" id="HM536696">
    <property type="protein sequence ID" value="ADU25085.1"/>
    <property type="molecule type" value="Genomic_DNA"/>
</dbReference>
<dbReference type="EMBL" id="HM536697">
    <property type="protein sequence ID" value="ADU25086.1"/>
    <property type="molecule type" value="Genomic_DNA"/>
</dbReference>
<dbReference type="EMBL" id="HM536698">
    <property type="protein sequence ID" value="ADU25087.1"/>
    <property type="molecule type" value="Genomic_DNA"/>
</dbReference>
<dbReference type="EMBL" id="HM536699">
    <property type="protein sequence ID" value="ADU25088.1"/>
    <property type="molecule type" value="Genomic_DNA"/>
</dbReference>
<dbReference type="EMBL" id="HM536700">
    <property type="protein sequence ID" value="ADU25089.1"/>
    <property type="molecule type" value="Genomic_DNA"/>
</dbReference>
<dbReference type="EMBL" id="HM627757">
    <property type="protein sequence ID" value="ADU25042.1"/>
    <property type="molecule type" value="mRNA"/>
</dbReference>
<dbReference type="EMBL" id="HM627758">
    <property type="protein sequence ID" value="ADU25043.1"/>
    <property type="status" value="ALT_FRAME"/>
    <property type="molecule type" value="mRNA"/>
</dbReference>
<dbReference type="SMR" id="C0KJQ4"/>
<dbReference type="GlyCosmos" id="C0KJQ4">
    <property type="glycosylation" value="1 site, No reported glycans"/>
</dbReference>
<dbReference type="EnsemblMetazoa" id="XM_045276085.1">
    <molecule id="C0KJQ4-1"/>
    <property type="protein sequence ID" value="XP_045132020.1"/>
    <property type="gene ID" value="LOC123516576"/>
</dbReference>
<dbReference type="EnsemblMetazoa" id="XM_045276086.1">
    <molecule id="C0KJQ4-1"/>
    <property type="protein sequence ID" value="XP_045132021.1"/>
    <property type="gene ID" value="LOC123516576"/>
</dbReference>
<dbReference type="EnsemblMetazoa" id="XM_045276087.1">
    <molecule id="C0KJQ4-1"/>
    <property type="protein sequence ID" value="XP_045132022.1"/>
    <property type="gene ID" value="LOC123516576"/>
</dbReference>
<dbReference type="OrthoDB" id="6368080at2759"/>
<dbReference type="GO" id="GO:0005576">
    <property type="term" value="C:extracellular region"/>
    <property type="evidence" value="ECO:0007669"/>
    <property type="project" value="UniProtKB-SubCell"/>
</dbReference>
<dbReference type="GO" id="GO:0042742">
    <property type="term" value="P:defense response to bacterium"/>
    <property type="evidence" value="ECO:0007669"/>
    <property type="project" value="UniProtKB-KW"/>
</dbReference>
<dbReference type="Gene3D" id="3.30.160.320">
    <property type="match status" value="1"/>
</dbReference>
<dbReference type="InterPro" id="IPR024509">
    <property type="entry name" value="Anti-LPS_factor/Scygonadin"/>
</dbReference>
<dbReference type="InterPro" id="IPR038539">
    <property type="entry name" value="Anti-LPS_factor/Scygonadin_sf"/>
</dbReference>
<dbReference type="Pfam" id="PF11630">
    <property type="entry name" value="Anti-LPS-SCYG"/>
    <property type="match status" value="1"/>
</dbReference>
<organism>
    <name type="scientific">Portunus trituberculatus</name>
    <name type="common">Swimming crab</name>
    <name type="synonym">Neptunus trituberculatus</name>
    <dbReference type="NCBI Taxonomy" id="210409"/>
    <lineage>
        <taxon>Eukaryota</taxon>
        <taxon>Metazoa</taxon>
        <taxon>Ecdysozoa</taxon>
        <taxon>Arthropoda</taxon>
        <taxon>Crustacea</taxon>
        <taxon>Multicrustacea</taxon>
        <taxon>Malacostraca</taxon>
        <taxon>Eumalacostraca</taxon>
        <taxon>Eucarida</taxon>
        <taxon>Decapoda</taxon>
        <taxon>Pleocyemata</taxon>
        <taxon>Brachyura</taxon>
        <taxon>Eubrachyura</taxon>
        <taxon>Portunoidea</taxon>
        <taxon>Portunidae</taxon>
        <taxon>Portuninae</taxon>
        <taxon>Portunus</taxon>
    </lineage>
</organism>
<evidence type="ECO:0000250" key="1">
    <source>
        <dbReference type="UniProtKB" id="B5TTX7"/>
    </source>
</evidence>
<evidence type="ECO:0000250" key="2">
    <source>
        <dbReference type="UniProtKB" id="P07086"/>
    </source>
</evidence>
<evidence type="ECO:0000255" key="3"/>
<evidence type="ECO:0000269" key="4">
    <source>
    </source>
</evidence>
<evidence type="ECO:0000269" key="5">
    <source>
    </source>
</evidence>
<evidence type="ECO:0000303" key="6">
    <source>
    </source>
</evidence>
<evidence type="ECO:0000303" key="7">
    <source>
    </source>
</evidence>
<evidence type="ECO:0000305" key="8"/>
<evidence type="ECO:0000312" key="9">
    <source>
        <dbReference type="EMBL" id="ACM89169.2"/>
    </source>
</evidence>
<evidence type="ECO:0000312" key="10">
    <source>
        <dbReference type="EMBL" id="ACS45385.2"/>
    </source>
</evidence>
<reference evidence="8 9" key="1">
    <citation type="journal article" date="2010" name="Comp. Biochem. Physiol.">
        <title>Molecular cloning, characterization and mRNA expression of two antibacterial peptides: crustin and anti-lipopolysaccharide factor in swimming crab Portunus trituberculatus.</title>
        <authorList>
            <person name="Yue F."/>
            <person name="Pan L."/>
            <person name="Miao J."/>
            <person name="Zhang L."/>
            <person name="Li J."/>
        </authorList>
    </citation>
    <scope>NUCLEOTIDE SEQUENCE [MRNA] (ISOFORM 1)</scope>
    <scope>TISSUE SPECIFICITY</scope>
    <scope>INDUCTION</scope>
    <source>
        <tissue evidence="4">Hemocyte</tissue>
    </source>
</reference>
<reference evidence="8 10" key="2">
    <citation type="journal article" date="2011" name="Fish Shellfish Immunol.">
        <title>Three isoforms of anti-lipopolysaccharide factor identified from eyestalk cDNA library of swimming crab Portunus trituberculatus.</title>
        <authorList>
            <person name="Liu Y."/>
            <person name="Cui Z."/>
            <person name="Luan W."/>
            <person name="Song C."/>
            <person name="Nie Q."/>
            <person name="Wang S."/>
            <person name="Li Q."/>
        </authorList>
    </citation>
    <scope>NUCLEOTIDE SEQUENCE [GENOMIC DNA / MRNA] (ISOFORMS 1 AND 2)</scope>
    <scope>ALTERNATIVE SPLICING</scope>
    <scope>TISSUE SPECIFICITY</scope>
    <scope>INDUCTION</scope>
    <source>
        <tissue evidence="5">Eyestalk</tissue>
    </source>
</reference>
<feature type="signal peptide" evidence="3">
    <location>
        <begin position="1"/>
        <end position="26"/>
    </location>
</feature>
<feature type="chain" id="PRO_0000410488" description="Anti-lipopolysaccharide factor" evidence="3">
    <location>
        <begin position="27"/>
        <end position="123"/>
    </location>
</feature>
<feature type="glycosylation site" description="N-linked (GlcNAc...) asparagine" evidence="3">
    <location>
        <position position="45"/>
    </location>
</feature>
<feature type="disulfide bond" evidence="2">
    <location>
        <begin position="55"/>
        <end position="76"/>
    </location>
</feature>
<feature type="splice variant" id="VSP_041458" description="In isoform 2." evidence="7">
    <original>SRTKSRSGSSREATKDFVRKALQNGLVTQQDASLWLNN</original>
    <variation>CKYCVVF</variation>
    <location>
        <begin position="86"/>
        <end position="123"/>
    </location>
</feature>
<feature type="sequence conflict" description="In Ref. 2; ADU25082." evidence="5" ref="2">
    <original>HN</original>
    <variation>RS</variation>
    <location>
        <begin position="44"/>
        <end position="45"/>
    </location>
</feature>
<feature type="sequence conflict" description="In Ref. 2; ADU25086." evidence="5" ref="2">
    <original>S</original>
    <variation>P</variation>
    <location>
        <position position="47"/>
    </location>
</feature>
<feature type="sequence conflict" description="In Ref. 2; ADU25082." evidence="5" ref="2">
    <original>F</original>
    <variation>L</variation>
    <location>
        <position position="50"/>
    </location>
</feature>
<feature type="sequence conflict" description="In Ref. 2; ADU25085." evidence="5" ref="2">
    <original>C</original>
    <variation>Y</variation>
    <location>
        <position position="55"/>
    </location>
</feature>
<feature type="sequence conflict" description="In Ref. 2; ADU25086." evidence="5" ref="2">
    <original>F</original>
    <variation>S</variation>
    <location>
        <position position="66"/>
    </location>
</feature>
<feature type="sequence conflict" description="In Ref. 2; ADU25083." evidence="5" ref="2">
    <original>K</original>
    <variation>R</variation>
    <location>
        <position position="73"/>
    </location>
</feature>
<feature type="sequence conflict" description="In Ref. 2; ADU25086." evidence="5" ref="2">
    <original>F</original>
    <variation>L</variation>
    <location>
        <position position="74"/>
    </location>
</feature>
<feature type="sequence conflict" description="In Ref. 2; ADU25079." evidence="5" ref="2">
    <original>C</original>
    <variation>R</variation>
    <location>
        <position position="76"/>
    </location>
</feature>
<feature type="sequence conflict" description="In Ref. 2; ADU25079." evidence="5" ref="2">
    <original>W</original>
    <variation>R</variation>
    <location>
        <position position="79"/>
    </location>
</feature>
<feature type="sequence conflict" description="In Ref. 2; ADU25087." evidence="5" ref="2">
    <original>K</original>
    <variation>E</variation>
    <location>
        <position position="100"/>
    </location>
</feature>
<feature type="sequence conflict" description="In Ref. 2; ADU25072." evidence="5" ref="2">
    <original>V</original>
    <variation>A</variation>
    <location>
        <position position="103"/>
    </location>
</feature>
<feature type="sequence conflict" description="In Ref. 2; ADU25068." evidence="5" ref="2">
    <original>Q</original>
    <variation>L</variation>
    <location>
        <position position="115"/>
    </location>
</feature>
<feature type="sequence conflict" description="In Ref. 2; ADU25061." evidence="5" ref="2">
    <location>
        <begin position="120"/>
        <end position="123"/>
    </location>
</feature>
<feature type="sequence conflict" description="In Ref. 2; ADU25087." evidence="5" ref="2">
    <original>L</original>
    <variation>R</variation>
    <location>
        <position position="121"/>
    </location>
</feature>
<sequence>MRKGVVAGLCLALVVMCLYLPQPCEAQYEALVTSILGKLTGLWHNDSVDFMGHICYFRRRPKIRRFKLYHEGKFWCPGWAPFEGRSRTKSRSGSSREATKDFVRKALQNGLVTQQDASLWLNN</sequence>